<name>AROD_SALCH</name>
<gene>
    <name evidence="1" type="primary">aroD</name>
    <name type="ordered locus">SCH_1377</name>
</gene>
<keyword id="KW-0028">Amino-acid biosynthesis</keyword>
<keyword id="KW-0057">Aromatic amino acid biosynthesis</keyword>
<keyword id="KW-0456">Lyase</keyword>
<keyword id="KW-0704">Schiff base</keyword>
<dbReference type="EC" id="4.2.1.10" evidence="1"/>
<dbReference type="EMBL" id="AE017220">
    <property type="protein sequence ID" value="AAX65283.1"/>
    <property type="molecule type" value="Genomic_DNA"/>
</dbReference>
<dbReference type="RefSeq" id="WP_000860219.1">
    <property type="nucleotide sequence ID" value="NC_006905.1"/>
</dbReference>
<dbReference type="SMR" id="Q57PS8"/>
<dbReference type="KEGG" id="sec:SCH_1377"/>
<dbReference type="HOGENOM" id="CLU_064444_0_0_6"/>
<dbReference type="UniPathway" id="UPA00053">
    <property type="reaction ID" value="UER00086"/>
</dbReference>
<dbReference type="Proteomes" id="UP000000538">
    <property type="component" value="Chromosome"/>
</dbReference>
<dbReference type="GO" id="GO:0003855">
    <property type="term" value="F:3-dehydroquinate dehydratase activity"/>
    <property type="evidence" value="ECO:0007669"/>
    <property type="project" value="UniProtKB-UniRule"/>
</dbReference>
<dbReference type="GO" id="GO:0046279">
    <property type="term" value="P:3,4-dihydroxybenzoate biosynthetic process"/>
    <property type="evidence" value="ECO:0007669"/>
    <property type="project" value="UniProtKB-ARBA"/>
</dbReference>
<dbReference type="GO" id="GO:0008652">
    <property type="term" value="P:amino acid biosynthetic process"/>
    <property type="evidence" value="ECO:0007669"/>
    <property type="project" value="UniProtKB-KW"/>
</dbReference>
<dbReference type="GO" id="GO:0009073">
    <property type="term" value="P:aromatic amino acid family biosynthetic process"/>
    <property type="evidence" value="ECO:0007669"/>
    <property type="project" value="UniProtKB-KW"/>
</dbReference>
<dbReference type="GO" id="GO:0009423">
    <property type="term" value="P:chorismate biosynthetic process"/>
    <property type="evidence" value="ECO:0007669"/>
    <property type="project" value="UniProtKB-UniRule"/>
</dbReference>
<dbReference type="CDD" id="cd00502">
    <property type="entry name" value="DHQase_I"/>
    <property type="match status" value="1"/>
</dbReference>
<dbReference type="FunFam" id="3.20.20.70:FF:000047">
    <property type="entry name" value="3-dehydroquinate dehydratase"/>
    <property type="match status" value="1"/>
</dbReference>
<dbReference type="Gene3D" id="3.20.20.70">
    <property type="entry name" value="Aldolase class I"/>
    <property type="match status" value="1"/>
</dbReference>
<dbReference type="HAMAP" id="MF_00214">
    <property type="entry name" value="AroD"/>
    <property type="match status" value="1"/>
</dbReference>
<dbReference type="InterPro" id="IPR018508">
    <property type="entry name" value="3-dehydroquinate_DH_AS"/>
</dbReference>
<dbReference type="InterPro" id="IPR013785">
    <property type="entry name" value="Aldolase_TIM"/>
</dbReference>
<dbReference type="InterPro" id="IPR001381">
    <property type="entry name" value="DHquinase_I"/>
</dbReference>
<dbReference type="InterPro" id="IPR050146">
    <property type="entry name" value="Type-I_3-dehydroquinase"/>
</dbReference>
<dbReference type="NCBIfam" id="TIGR01093">
    <property type="entry name" value="aroD"/>
    <property type="match status" value="1"/>
</dbReference>
<dbReference type="PANTHER" id="PTHR43699">
    <property type="entry name" value="3-DEHYDROQUINATE DEHYDRATASE"/>
    <property type="match status" value="1"/>
</dbReference>
<dbReference type="PANTHER" id="PTHR43699:SF1">
    <property type="entry name" value="3-DEHYDROQUINATE DEHYDRATASE"/>
    <property type="match status" value="1"/>
</dbReference>
<dbReference type="Pfam" id="PF01487">
    <property type="entry name" value="DHquinase_I"/>
    <property type="match status" value="1"/>
</dbReference>
<dbReference type="SUPFAM" id="SSF51569">
    <property type="entry name" value="Aldolase"/>
    <property type="match status" value="1"/>
</dbReference>
<dbReference type="PROSITE" id="PS01028">
    <property type="entry name" value="DEHYDROQUINASE_I"/>
    <property type="match status" value="1"/>
</dbReference>
<accession>Q57PS8</accession>
<feature type="chain" id="PRO_1000043179" description="3-dehydroquinate dehydratase">
    <location>
        <begin position="1"/>
        <end position="252"/>
    </location>
</feature>
<feature type="active site" description="Proton donor/acceptor" evidence="1">
    <location>
        <position position="143"/>
    </location>
</feature>
<feature type="active site" description="Schiff-base intermediate with substrate" evidence="1">
    <location>
        <position position="170"/>
    </location>
</feature>
<feature type="binding site" evidence="1">
    <location>
        <position position="21"/>
    </location>
    <ligand>
        <name>3-dehydroquinate</name>
        <dbReference type="ChEBI" id="CHEBI:32364"/>
    </ligand>
</feature>
<feature type="binding site" evidence="1">
    <location>
        <begin position="46"/>
        <end position="48"/>
    </location>
    <ligand>
        <name>3-dehydroquinate</name>
        <dbReference type="ChEBI" id="CHEBI:32364"/>
    </ligand>
</feature>
<feature type="binding site" evidence="1">
    <location>
        <position position="82"/>
    </location>
    <ligand>
        <name>3-dehydroquinate</name>
        <dbReference type="ChEBI" id="CHEBI:32364"/>
    </ligand>
</feature>
<feature type="binding site" evidence="1">
    <location>
        <position position="213"/>
    </location>
    <ligand>
        <name>3-dehydroquinate</name>
        <dbReference type="ChEBI" id="CHEBI:32364"/>
    </ligand>
</feature>
<feature type="binding site" evidence="1">
    <location>
        <position position="232"/>
    </location>
    <ligand>
        <name>3-dehydroquinate</name>
        <dbReference type="ChEBI" id="CHEBI:32364"/>
    </ligand>
</feature>
<feature type="binding site" evidence="1">
    <location>
        <position position="236"/>
    </location>
    <ligand>
        <name>3-dehydroquinate</name>
        <dbReference type="ChEBI" id="CHEBI:32364"/>
    </ligand>
</feature>
<protein>
    <recommendedName>
        <fullName evidence="1">3-dehydroquinate dehydratase</fullName>
        <shortName evidence="1">3-dehydroquinase</shortName>
        <ecNumber evidence="1">4.2.1.10</ecNumber>
    </recommendedName>
    <alternativeName>
        <fullName evidence="1">Type I DHQase</fullName>
    </alternativeName>
    <alternativeName>
        <fullName evidence="1">Type I dehydroquinase</fullName>
        <shortName evidence="1">DHQ1</shortName>
    </alternativeName>
</protein>
<evidence type="ECO:0000255" key="1">
    <source>
        <dbReference type="HAMAP-Rule" id="MF_00214"/>
    </source>
</evidence>
<proteinExistence type="inferred from homology"/>
<organism>
    <name type="scientific">Salmonella choleraesuis (strain SC-B67)</name>
    <dbReference type="NCBI Taxonomy" id="321314"/>
    <lineage>
        <taxon>Bacteria</taxon>
        <taxon>Pseudomonadati</taxon>
        <taxon>Pseudomonadota</taxon>
        <taxon>Gammaproteobacteria</taxon>
        <taxon>Enterobacterales</taxon>
        <taxon>Enterobacteriaceae</taxon>
        <taxon>Salmonella</taxon>
    </lineage>
</organism>
<reference key="1">
    <citation type="journal article" date="2005" name="Nucleic Acids Res.">
        <title>The genome sequence of Salmonella enterica serovar Choleraesuis, a highly invasive and resistant zoonotic pathogen.</title>
        <authorList>
            <person name="Chiu C.-H."/>
            <person name="Tang P."/>
            <person name="Chu C."/>
            <person name="Hu S."/>
            <person name="Bao Q."/>
            <person name="Yu J."/>
            <person name="Chou Y.-Y."/>
            <person name="Wang H.-S."/>
            <person name="Lee Y.-S."/>
        </authorList>
    </citation>
    <scope>NUCLEOTIDE SEQUENCE [LARGE SCALE GENOMIC DNA]</scope>
    <source>
        <strain>SC-B67</strain>
    </source>
</reference>
<comment type="function">
    <text evidence="1">Involved in the third step of the chorismate pathway, which leads to the biosynthesis of aromatic amino acids. Catalyzes the cis-dehydration of 3-dehydroquinate (DHQ) and introduces the first double bond of the aromatic ring to yield 3-dehydroshikimate.</text>
</comment>
<comment type="catalytic activity">
    <reaction evidence="1">
        <text>3-dehydroquinate = 3-dehydroshikimate + H2O</text>
        <dbReference type="Rhea" id="RHEA:21096"/>
        <dbReference type="ChEBI" id="CHEBI:15377"/>
        <dbReference type="ChEBI" id="CHEBI:16630"/>
        <dbReference type="ChEBI" id="CHEBI:32364"/>
        <dbReference type="EC" id="4.2.1.10"/>
    </reaction>
</comment>
<comment type="pathway">
    <text evidence="1">Metabolic intermediate biosynthesis; chorismate biosynthesis; chorismate from D-erythrose 4-phosphate and phosphoenolpyruvate: step 3/7.</text>
</comment>
<comment type="subunit">
    <text evidence="1">Homodimer.</text>
</comment>
<comment type="similarity">
    <text evidence="1">Belongs to the type-I 3-dehydroquinase family.</text>
</comment>
<sequence length="252" mass="27253">MKTVTVRDLVVGEGAPKIIVSLMGKTITDVKSEALAYREADFDILEWRVDHFANVTTAESVLEAAGAIQEIITDKPLLFTFRSAKEGGEQALTTGQYIALNRAAVDSGLVDMIDLELFTGDDEVKATVGYAHQHNVAVIMSNHDFHKTPAAEEIVQRLRKMQELGADIPKIAVMPQTKADVLTLLTATVEMQERYADRPIITMSMSKTGVISRLAGEVFGSAATFGAVKKASAPGQISVADLRTVLTILHQA</sequence>